<proteinExistence type="evidence at protein level"/>
<evidence type="ECO:0000250" key="1">
    <source>
        <dbReference type="UniProtKB" id="Q57815"/>
    </source>
</evidence>
<evidence type="ECO:0000255" key="2">
    <source>
        <dbReference type="PROSITE-ProRule" id="PRU01385"/>
    </source>
</evidence>
<evidence type="ECO:0000269" key="3">
    <source>
    </source>
</evidence>
<evidence type="ECO:0000269" key="4">
    <source>
    </source>
</evidence>
<evidence type="ECO:0000269" key="5">
    <source>
    </source>
</evidence>
<evidence type="ECO:0000269" key="6">
    <source>
    </source>
</evidence>
<evidence type="ECO:0000269" key="7">
    <source>
    </source>
</evidence>
<evidence type="ECO:0000269" key="8">
    <source>
    </source>
</evidence>
<evidence type="ECO:0000303" key="9">
    <source>
    </source>
</evidence>
<evidence type="ECO:0000303" key="10">
    <source>
    </source>
</evidence>
<evidence type="ECO:0000305" key="11"/>
<evidence type="ECO:0000312" key="12">
    <source>
        <dbReference type="PomBase" id="SPAC17A5.11"/>
    </source>
</evidence>
<accession>P40384</accession>
<comment type="function">
    <text evidence="3 4 5">Required for formation of the double-strand breaks (DSBs) that initiate meiotic recombination (PubMed:10882124). Required for crossover recombination and chiasmatic segregation of chromosomes during meiosis I. Also involved in the faithful equational segregation of chromosomes during meiosis II (PubMed:12437782, PubMed:16303567).</text>
</comment>
<comment type="catalytic activity">
    <reaction evidence="2 4">
        <text>ATP-dependent breakage, passage and rejoining of double-stranded DNA.</text>
        <dbReference type="EC" id="5.6.2.2"/>
    </reaction>
</comment>
<comment type="cofactor">
    <cofactor evidence="1">
        <name>Mg(2+)</name>
        <dbReference type="ChEBI" id="CHEBI:18420"/>
    </cofactor>
</comment>
<comment type="subunit">
    <text evidence="7">Component of the DSB catalytic core (DSBC) complex, composed of at least rec12, rec6 and rec14. The complex interacts with mde2.</text>
</comment>
<comment type="subcellular location">
    <subcellularLocation>
        <location evidence="6">Cytoplasm</location>
    </subcellularLocation>
    <subcellularLocation>
        <location evidence="6">Nucleus</location>
    </subcellularLocation>
</comment>
<comment type="developmental stage">
    <text evidence="8">Most abundant at 2 hours after induction of meiosis, at the time of premeiotic DNA synthesis. Found at much lower levels before and after this time.</text>
</comment>
<comment type="similarity">
    <text evidence="11">Belongs to the TOP6A family.</text>
</comment>
<sequence>MNSNDKKKVVRSWIEQFVHDFVEQLSKPTKDSVNVALKRRKHNSWNGSLDSKANERQKVKVFSFPRNETTIAQLFRVLDCVHEAVISDTVITKRDIYYRDVDLFKRQTVVDELLGDISNTIGCSRSDLNVEASAKGLVFGSIHIALENGTVITATKPLLISHHRISSITSTAKWVLVIEKEAVFQTLTEEALADTIIVTAKGFPDLMTRKFLVKLAKALPDAKFFGIFDWDPHGLCIYSCFKYGSNAYSHEPHSQLRNLQLLGPLYEDIFNKNQEFSLKLNKRDIKMITTLLQFEGFQKEPVVREQLQRMLFIQKKAEIQAILEFPSWIKGKLADADKSGKHSVR</sequence>
<feature type="chain" id="PRO_0000145477" description="Meiotic recombination protein rec12">
    <location>
        <begin position="1"/>
        <end position="345"/>
    </location>
</feature>
<feature type="domain" description="Topo IIA-type catalytic" evidence="2">
    <location>
        <begin position="5"/>
        <end position="137"/>
    </location>
</feature>
<feature type="active site" description="O-(5'-phospho-DNA)-tyrosine intermediate" evidence="2 4">
    <location>
        <position position="98"/>
    </location>
</feature>
<feature type="binding site" evidence="1">
    <location>
        <position position="179"/>
    </location>
    <ligand>
        <name>Mg(2+)</name>
        <dbReference type="ChEBI" id="CHEBI:18420"/>
    </ligand>
</feature>
<feature type="binding site" evidence="1">
    <location>
        <position position="229"/>
    </location>
    <ligand>
        <name>Mg(2+)</name>
        <dbReference type="ChEBI" id="CHEBI:18420"/>
    </ligand>
</feature>
<feature type="mutagenesis site" description="Errors in meiosis II segregation." evidence="4">
    <original>Y</original>
    <variation>F</variation>
    <location>
        <position position="98"/>
    </location>
</feature>
<keyword id="KW-0159">Chromosome partition</keyword>
<keyword id="KW-0963">Cytoplasm</keyword>
<keyword id="KW-0238">DNA-binding</keyword>
<keyword id="KW-0413">Isomerase</keyword>
<keyword id="KW-0460">Magnesium</keyword>
<keyword id="KW-0469">Meiosis</keyword>
<keyword id="KW-0479">Metal-binding</keyword>
<keyword id="KW-0539">Nucleus</keyword>
<keyword id="KW-1185">Reference proteome</keyword>
<keyword id="KW-0799">Topoisomerase</keyword>
<name>SPO11_SCHPO</name>
<reference key="1">
    <citation type="journal article" date="2002" name="Cell Chromosome">
        <title>Distinct functions of S. pombe Rec12 (Spo11) protein and Rec12-dependent crossover recombination (chiasmata) in meiosis I; and a requirement for Rec12 in meiosis II.</title>
        <authorList>
            <person name="Sharif W.D."/>
            <person name="Glick G.G."/>
            <person name="Davidson M.K."/>
            <person name="Wahls W.P."/>
        </authorList>
    </citation>
    <scope>NUCLEOTIDE SEQUENCE [MRNA]</scope>
    <scope>FUNCTION</scope>
    <scope>CATALYTIC ACTIVITY</scope>
    <scope>ACTIVE SITE</scope>
    <scope>MUTAGENESIS OF TYR-98</scope>
</reference>
<reference key="2">
    <citation type="journal article" date="2002" name="Nature">
        <title>The genome sequence of Schizosaccharomyces pombe.</title>
        <authorList>
            <person name="Wood V."/>
            <person name="Gwilliam R."/>
            <person name="Rajandream M.A."/>
            <person name="Lyne M.H."/>
            <person name="Lyne R."/>
            <person name="Stewart A."/>
            <person name="Sgouros J.G."/>
            <person name="Peat N."/>
            <person name="Hayles J."/>
            <person name="Baker S.G."/>
            <person name="Basham D."/>
            <person name="Bowman S."/>
            <person name="Brooks K."/>
            <person name="Brown D."/>
            <person name="Brown S."/>
            <person name="Chillingworth T."/>
            <person name="Churcher C.M."/>
            <person name="Collins M."/>
            <person name="Connor R."/>
            <person name="Cronin A."/>
            <person name="Davis P."/>
            <person name="Feltwell T."/>
            <person name="Fraser A."/>
            <person name="Gentles S."/>
            <person name="Goble A."/>
            <person name="Hamlin N."/>
            <person name="Harris D.E."/>
            <person name="Hidalgo J."/>
            <person name="Hodgson G."/>
            <person name="Holroyd S."/>
            <person name="Hornsby T."/>
            <person name="Howarth S."/>
            <person name="Huckle E.J."/>
            <person name="Hunt S."/>
            <person name="Jagels K."/>
            <person name="James K.D."/>
            <person name="Jones L."/>
            <person name="Jones M."/>
            <person name="Leather S."/>
            <person name="McDonald S."/>
            <person name="McLean J."/>
            <person name="Mooney P."/>
            <person name="Moule S."/>
            <person name="Mungall K.L."/>
            <person name="Murphy L.D."/>
            <person name="Niblett D."/>
            <person name="Odell C."/>
            <person name="Oliver K."/>
            <person name="O'Neil S."/>
            <person name="Pearson D."/>
            <person name="Quail M.A."/>
            <person name="Rabbinowitsch E."/>
            <person name="Rutherford K.M."/>
            <person name="Rutter S."/>
            <person name="Saunders D."/>
            <person name="Seeger K."/>
            <person name="Sharp S."/>
            <person name="Skelton J."/>
            <person name="Simmonds M.N."/>
            <person name="Squares R."/>
            <person name="Squares S."/>
            <person name="Stevens K."/>
            <person name="Taylor K."/>
            <person name="Taylor R.G."/>
            <person name="Tivey A."/>
            <person name="Walsh S.V."/>
            <person name="Warren T."/>
            <person name="Whitehead S."/>
            <person name="Woodward J.R."/>
            <person name="Volckaert G."/>
            <person name="Aert R."/>
            <person name="Robben J."/>
            <person name="Grymonprez B."/>
            <person name="Weltjens I."/>
            <person name="Vanstreels E."/>
            <person name="Rieger M."/>
            <person name="Schaefer M."/>
            <person name="Mueller-Auer S."/>
            <person name="Gabel C."/>
            <person name="Fuchs M."/>
            <person name="Duesterhoeft A."/>
            <person name="Fritzc C."/>
            <person name="Holzer E."/>
            <person name="Moestl D."/>
            <person name="Hilbert H."/>
            <person name="Borzym K."/>
            <person name="Langer I."/>
            <person name="Beck A."/>
            <person name="Lehrach H."/>
            <person name="Reinhardt R."/>
            <person name="Pohl T.M."/>
            <person name="Eger P."/>
            <person name="Zimmermann W."/>
            <person name="Wedler H."/>
            <person name="Wambutt R."/>
            <person name="Purnelle B."/>
            <person name="Goffeau A."/>
            <person name="Cadieu E."/>
            <person name="Dreano S."/>
            <person name="Gloux S."/>
            <person name="Lelaure V."/>
            <person name="Mottier S."/>
            <person name="Galibert F."/>
            <person name="Aves S.J."/>
            <person name="Xiang Z."/>
            <person name="Hunt C."/>
            <person name="Moore K."/>
            <person name="Hurst S.M."/>
            <person name="Lucas M."/>
            <person name="Rochet M."/>
            <person name="Gaillardin C."/>
            <person name="Tallada V.A."/>
            <person name="Garzon A."/>
            <person name="Thode G."/>
            <person name="Daga R.R."/>
            <person name="Cruzado L."/>
            <person name="Jimenez J."/>
            <person name="Sanchez M."/>
            <person name="del Rey F."/>
            <person name="Benito J."/>
            <person name="Dominguez A."/>
            <person name="Revuelta J.L."/>
            <person name="Moreno S."/>
            <person name="Armstrong J."/>
            <person name="Forsburg S.L."/>
            <person name="Cerutti L."/>
            <person name="Lowe T."/>
            <person name="McCombie W.R."/>
            <person name="Paulsen I."/>
            <person name="Potashkin J."/>
            <person name="Shpakovski G.V."/>
            <person name="Ussery D."/>
            <person name="Barrell B.G."/>
            <person name="Nurse P."/>
        </authorList>
    </citation>
    <scope>NUCLEOTIDE SEQUENCE [LARGE SCALE GENOMIC DNA]</scope>
    <source>
        <strain>972 / ATCC 24843</strain>
    </source>
</reference>
<reference key="3">
    <citation type="journal article" date="1994" name="Genetics">
        <title>Transient, meiosis-induced expression of the rec6 and rec12 genes of Schizosaccharomyces pombe.</title>
        <authorList>
            <person name="Lin Y."/>
            <person name="Smith G.R."/>
        </authorList>
    </citation>
    <scope>NUCLEOTIDE SEQUENCE [GENOMIC DNA] OF 207-335</scope>
    <scope>DEVELOPMENTAL STAGE</scope>
</reference>
<reference key="4">
    <citation type="journal article" date="2000" name="Mol. Cell">
        <title>Meiotic DNA breaks associated with recombination in S. pombe.</title>
        <authorList>
            <person name="Cervantes M.D."/>
            <person name="Farah J.A."/>
            <person name="Smith G.R."/>
        </authorList>
    </citation>
    <scope>FUNCTION</scope>
</reference>
<reference key="5">
    <citation type="journal article" date="2005" name="Curr. Biol.">
        <title>A large-scale screen in S. pombe identifies seven novel genes required for critical meiotic events.</title>
        <authorList>
            <person name="Martin-Castellanos C."/>
            <person name="Blanco M."/>
            <person name="Rozalen A.E."/>
            <person name="Perez-Hidalgo L."/>
            <person name="Garcia A.I."/>
            <person name="Conde F."/>
            <person name="Mata J."/>
            <person name="Ellermeier C."/>
            <person name="Davis L."/>
            <person name="San-Segundo P."/>
            <person name="Smith G.R."/>
            <person name="Moreno S."/>
        </authorList>
    </citation>
    <scope>FUNCTION IN MEIOSIS</scope>
</reference>
<reference key="6">
    <citation type="journal article" date="2006" name="Nat. Biotechnol.">
        <title>ORFeome cloning and global analysis of protein localization in the fission yeast Schizosaccharomyces pombe.</title>
        <authorList>
            <person name="Matsuyama A."/>
            <person name="Arai R."/>
            <person name="Yashiroda Y."/>
            <person name="Shirai A."/>
            <person name="Kamata A."/>
            <person name="Sekido S."/>
            <person name="Kobayashi Y."/>
            <person name="Hashimoto A."/>
            <person name="Hamamoto M."/>
            <person name="Hiraoka Y."/>
            <person name="Horinouchi S."/>
            <person name="Yoshida M."/>
        </authorList>
    </citation>
    <scope>SUBCELLULAR LOCATION [LARGE SCALE ANALYSIS]</scope>
</reference>
<reference key="7">
    <citation type="journal article" date="2012" name="Mol. Cell">
        <title>A central coupler for recombination initiation linking chromosome architecture to S phase checkpoint.</title>
        <authorList>
            <person name="Miyoshi T."/>
            <person name="Ito M."/>
            <person name="Kugou K."/>
            <person name="Yamada S."/>
            <person name="Furuichi M."/>
            <person name="Oda A."/>
            <person name="Yamada T."/>
            <person name="Hirota K."/>
            <person name="Masai H."/>
            <person name="Ohta K."/>
        </authorList>
    </citation>
    <scope>IDENTIFICATION IN DSBC COMPLEX</scope>
</reference>
<organism>
    <name type="scientific">Schizosaccharomyces pombe (strain 972 / ATCC 24843)</name>
    <name type="common">Fission yeast</name>
    <dbReference type="NCBI Taxonomy" id="284812"/>
    <lineage>
        <taxon>Eukaryota</taxon>
        <taxon>Fungi</taxon>
        <taxon>Dikarya</taxon>
        <taxon>Ascomycota</taxon>
        <taxon>Taphrinomycotina</taxon>
        <taxon>Schizosaccharomycetes</taxon>
        <taxon>Schizosaccharomycetales</taxon>
        <taxon>Schizosaccharomycetaceae</taxon>
        <taxon>Schizosaccharomyces</taxon>
    </lineage>
</organism>
<protein>
    <recommendedName>
        <fullName evidence="10">Meiotic recombination protein rec12</fullName>
        <ecNumber evidence="4">5.6.2.2</ecNumber>
    </recommendedName>
    <alternativeName>
        <fullName evidence="9">SPO11 protein homolog</fullName>
    </alternativeName>
</protein>
<gene>
    <name evidence="10" type="primary">rec12</name>
    <name evidence="12" type="ORF">SPAC17A5.11</name>
</gene>
<dbReference type="EC" id="5.6.2.2" evidence="4"/>
<dbReference type="EMBL" id="AF195027">
    <property type="protein sequence ID" value="AAF06017.1"/>
    <property type="molecule type" value="mRNA"/>
</dbReference>
<dbReference type="EMBL" id="CU329670">
    <property type="protein sequence ID" value="CAB11511.1"/>
    <property type="molecule type" value="Genomic_DNA"/>
</dbReference>
<dbReference type="EMBL" id="L14774">
    <property type="protein sequence ID" value="AAA35332.1"/>
    <property type="molecule type" value="Genomic_DNA"/>
</dbReference>
<dbReference type="PIR" id="T37826">
    <property type="entry name" value="T37826"/>
</dbReference>
<dbReference type="RefSeq" id="NP_593479.1">
    <property type="nucleotide sequence ID" value="NM_001018912.1"/>
</dbReference>
<dbReference type="SMR" id="P40384"/>
<dbReference type="BioGRID" id="278626">
    <property type="interactions" value="56"/>
</dbReference>
<dbReference type="FunCoup" id="P40384">
    <property type="interactions" value="139"/>
</dbReference>
<dbReference type="STRING" id="284812.P40384"/>
<dbReference type="iPTMnet" id="P40384"/>
<dbReference type="PaxDb" id="4896-SPAC17A5.11.1"/>
<dbReference type="EnsemblFungi" id="SPAC17A5.11.1">
    <property type="protein sequence ID" value="SPAC17A5.11.1:pep"/>
    <property type="gene ID" value="SPAC17A5.11"/>
</dbReference>
<dbReference type="GeneID" id="2542150"/>
<dbReference type="KEGG" id="spo:2542150"/>
<dbReference type="PomBase" id="SPAC17A5.11">
    <property type="gene designation" value="rec12"/>
</dbReference>
<dbReference type="VEuPathDB" id="FungiDB:SPAC17A5.11"/>
<dbReference type="eggNOG" id="KOG2795">
    <property type="taxonomic scope" value="Eukaryota"/>
</dbReference>
<dbReference type="HOGENOM" id="CLU_037229_0_1_1"/>
<dbReference type="InParanoid" id="P40384"/>
<dbReference type="OMA" id="IYYLDPV"/>
<dbReference type="PhylomeDB" id="P40384"/>
<dbReference type="PRO" id="PR:P40384"/>
<dbReference type="Proteomes" id="UP000002485">
    <property type="component" value="Chromosome I"/>
</dbReference>
<dbReference type="GO" id="GO:0005737">
    <property type="term" value="C:cytoplasm"/>
    <property type="evidence" value="ECO:0007669"/>
    <property type="project" value="UniProtKB-SubCell"/>
</dbReference>
<dbReference type="GO" id="GO:0000228">
    <property type="term" value="C:nuclear chromosome"/>
    <property type="evidence" value="ECO:0000318"/>
    <property type="project" value="GO_Central"/>
</dbReference>
<dbReference type="GO" id="GO:0005634">
    <property type="term" value="C:nucleus"/>
    <property type="evidence" value="ECO:0007005"/>
    <property type="project" value="PomBase"/>
</dbReference>
<dbReference type="GO" id="GO:0035861">
    <property type="term" value="C:site of double-strand break"/>
    <property type="evidence" value="ECO:0000314"/>
    <property type="project" value="PomBase"/>
</dbReference>
<dbReference type="GO" id="GO:0005524">
    <property type="term" value="F:ATP binding"/>
    <property type="evidence" value="ECO:0000255"/>
    <property type="project" value="PomBase"/>
</dbReference>
<dbReference type="GO" id="GO:0016887">
    <property type="term" value="F:ATP hydrolysis activity"/>
    <property type="evidence" value="ECO:0000305"/>
    <property type="project" value="PomBase"/>
</dbReference>
<dbReference type="GO" id="GO:0003677">
    <property type="term" value="F:DNA binding"/>
    <property type="evidence" value="ECO:0000318"/>
    <property type="project" value="GO_Central"/>
</dbReference>
<dbReference type="GO" id="GO:0045027">
    <property type="term" value="F:DNA end binding"/>
    <property type="evidence" value="ECO:0000314"/>
    <property type="project" value="PomBase"/>
</dbReference>
<dbReference type="GO" id="GO:0003918">
    <property type="term" value="F:DNA topoisomerase type II (double strand cut, ATP-hydrolyzing) activity"/>
    <property type="evidence" value="ECO:0007669"/>
    <property type="project" value="InterPro"/>
</dbReference>
<dbReference type="GO" id="GO:0046872">
    <property type="term" value="F:metal ion binding"/>
    <property type="evidence" value="ECO:0007669"/>
    <property type="project" value="UniProtKB-KW"/>
</dbReference>
<dbReference type="GO" id="GO:0031619">
    <property type="term" value="P:homologous chromosome orientation in meiotic metaphase I"/>
    <property type="evidence" value="ECO:0000315"/>
    <property type="project" value="PomBase"/>
</dbReference>
<dbReference type="GO" id="GO:0042138">
    <property type="term" value="P:meiotic DNA double-strand break formation"/>
    <property type="evidence" value="ECO:0000315"/>
    <property type="project" value="PomBase"/>
</dbReference>
<dbReference type="GO" id="GO:0000706">
    <property type="term" value="P:meiotic DNA double-strand break processing"/>
    <property type="evidence" value="ECO:0000318"/>
    <property type="project" value="GO_Central"/>
</dbReference>
<dbReference type="GO" id="GO:0007131">
    <property type="term" value="P:reciprocal meiotic recombination"/>
    <property type="evidence" value="ECO:0000315"/>
    <property type="project" value="PomBase"/>
</dbReference>
<dbReference type="CDD" id="cd00223">
    <property type="entry name" value="TOPRIM_TopoIIB_SPO"/>
    <property type="match status" value="1"/>
</dbReference>
<dbReference type="Gene3D" id="3.40.1360.10">
    <property type="match status" value="1"/>
</dbReference>
<dbReference type="Gene3D" id="1.10.10.10">
    <property type="entry name" value="Winged helix-like DNA-binding domain superfamily/Winged helix DNA-binding domain"/>
    <property type="match status" value="1"/>
</dbReference>
<dbReference type="InterPro" id="IPR002815">
    <property type="entry name" value="Spo11/TopoVI_A"/>
</dbReference>
<dbReference type="InterPro" id="IPR013049">
    <property type="entry name" value="Spo11/TopoVI_A_N"/>
</dbReference>
<dbReference type="InterPro" id="IPR036078">
    <property type="entry name" value="Spo11/TopoVI_A_sf"/>
</dbReference>
<dbReference type="InterPro" id="IPR034136">
    <property type="entry name" value="TOPRIM_Topo6A/Spo11"/>
</dbReference>
<dbReference type="InterPro" id="IPR036388">
    <property type="entry name" value="WH-like_DNA-bd_sf"/>
</dbReference>
<dbReference type="PANTHER" id="PTHR10848">
    <property type="entry name" value="MEIOTIC RECOMBINATION PROTEIN SPO11"/>
    <property type="match status" value="1"/>
</dbReference>
<dbReference type="PANTHER" id="PTHR10848:SF0">
    <property type="entry name" value="MEIOTIC RECOMBINATION PROTEIN SPO11"/>
    <property type="match status" value="1"/>
</dbReference>
<dbReference type="Pfam" id="PF21180">
    <property type="entry name" value="TOP6A-Spo11_Toprim"/>
    <property type="match status" value="1"/>
</dbReference>
<dbReference type="Pfam" id="PF04406">
    <property type="entry name" value="TP6A_N"/>
    <property type="match status" value="1"/>
</dbReference>
<dbReference type="PRINTS" id="PR01550">
    <property type="entry name" value="TOP6AFAMILY"/>
</dbReference>
<dbReference type="SUPFAM" id="SSF56726">
    <property type="entry name" value="DNA topoisomerase IV, alpha subunit"/>
    <property type="match status" value="1"/>
</dbReference>
<dbReference type="PROSITE" id="PS52041">
    <property type="entry name" value="TOPO_IIB"/>
    <property type="match status" value="1"/>
</dbReference>